<sequence length="450" mass="50334">MRRLRFSPRSSFARTLLLIVTLLFASLVTTYLVVLNFAILPSLQQFNKVLAYEVRMLMTDKLQLEDGTQLVVPPAFRREIYRELGISLYSNEAAEEAGLRWAQHYEFLSHQMAQQLGGPTEVRVEVNKSSPVVWLKTWLSPNIWVRVPLTEIHQGDFSPLFRYTLAIMLLAIGGAWLFIRIQNRPLVDLEHAALQVGKGIIPPPLREYGASEVRSVTRAFNHMAAGVKQLADDRTLLMAGVSHDLRTPLTRIRLATEMMSEQDGYLAESINKDIEECNAIIEQFIDYLRTGQEMPMEMADLNAVLGEVIAAESGYEREIETALYPGSIEVKMHPLSIKRAVANMVVNAARYGNGWIKVSSGTEPNRAWFQVEDDGPGIAPEQRKHLFQPFVRGDSARTISGTGLGLAIVQRIVDNHNGMLELGTSERGGLSIRAWLPVPVTRAQGTTKEG</sequence>
<dbReference type="EC" id="2.7.13.3" evidence="1"/>
<dbReference type="EMBL" id="CP037923">
    <property type="protein sequence ID" value="QCC33845.1"/>
    <property type="molecule type" value="Genomic_DNA"/>
</dbReference>
<dbReference type="RefSeq" id="WP_001253696.1">
    <property type="nucleotide sequence ID" value="NZ_JANXIZ010000001.1"/>
</dbReference>
<dbReference type="SMR" id="A0A4P7TSF2"/>
<dbReference type="GeneID" id="93778594"/>
<dbReference type="Proteomes" id="UP000296678">
    <property type="component" value="Chromosome"/>
</dbReference>
<dbReference type="GO" id="GO:0005886">
    <property type="term" value="C:plasma membrane"/>
    <property type="evidence" value="ECO:0007669"/>
    <property type="project" value="UniProtKB-SubCell"/>
</dbReference>
<dbReference type="GO" id="GO:0005524">
    <property type="term" value="F:ATP binding"/>
    <property type="evidence" value="ECO:0007669"/>
    <property type="project" value="UniProtKB-KW"/>
</dbReference>
<dbReference type="GO" id="GO:0000155">
    <property type="term" value="F:phosphorelay sensor kinase activity"/>
    <property type="evidence" value="ECO:0007669"/>
    <property type="project" value="InterPro"/>
</dbReference>
<dbReference type="CDD" id="cd06225">
    <property type="entry name" value="HAMP"/>
    <property type="match status" value="1"/>
</dbReference>
<dbReference type="CDD" id="cd16950">
    <property type="entry name" value="HATPase_EnvZ-like"/>
    <property type="match status" value="1"/>
</dbReference>
<dbReference type="CDD" id="cd00082">
    <property type="entry name" value="HisKA"/>
    <property type="match status" value="1"/>
</dbReference>
<dbReference type="FunFam" id="1.10.287.130:FF:000006">
    <property type="entry name" value="Osmolarity two-component histidine kinase EnvZ"/>
    <property type="match status" value="1"/>
</dbReference>
<dbReference type="FunFam" id="3.30.565.10:FF:000018">
    <property type="entry name" value="Two-component sensor kinase EnvZ"/>
    <property type="match status" value="1"/>
</dbReference>
<dbReference type="Gene3D" id="1.10.287.130">
    <property type="match status" value="1"/>
</dbReference>
<dbReference type="Gene3D" id="3.30.565.10">
    <property type="entry name" value="Histidine kinase-like ATPase, C-terminal domain"/>
    <property type="match status" value="1"/>
</dbReference>
<dbReference type="InterPro" id="IPR050980">
    <property type="entry name" value="2C_sensor_his_kinase"/>
</dbReference>
<dbReference type="InterPro" id="IPR003660">
    <property type="entry name" value="HAMP_dom"/>
</dbReference>
<dbReference type="InterPro" id="IPR036890">
    <property type="entry name" value="HATPase_C_sf"/>
</dbReference>
<dbReference type="InterPro" id="IPR005467">
    <property type="entry name" value="His_kinase_dom"/>
</dbReference>
<dbReference type="InterPro" id="IPR003661">
    <property type="entry name" value="HisK_dim/P_dom"/>
</dbReference>
<dbReference type="InterPro" id="IPR036097">
    <property type="entry name" value="HisK_dim/P_sf"/>
</dbReference>
<dbReference type="InterPro" id="IPR004358">
    <property type="entry name" value="Sig_transdc_His_kin-like_C"/>
</dbReference>
<dbReference type="NCBIfam" id="NF007004">
    <property type="entry name" value="PRK09467.1"/>
    <property type="match status" value="1"/>
</dbReference>
<dbReference type="PANTHER" id="PTHR44936:SF5">
    <property type="entry name" value="SENSOR HISTIDINE KINASE ENVZ"/>
    <property type="match status" value="1"/>
</dbReference>
<dbReference type="PANTHER" id="PTHR44936">
    <property type="entry name" value="SENSOR PROTEIN CREC"/>
    <property type="match status" value="1"/>
</dbReference>
<dbReference type="Pfam" id="PF00672">
    <property type="entry name" value="HAMP"/>
    <property type="match status" value="1"/>
</dbReference>
<dbReference type="Pfam" id="PF02518">
    <property type="entry name" value="HATPase_c"/>
    <property type="match status" value="1"/>
</dbReference>
<dbReference type="Pfam" id="PF00512">
    <property type="entry name" value="HisKA"/>
    <property type="match status" value="1"/>
</dbReference>
<dbReference type="PRINTS" id="PR00344">
    <property type="entry name" value="BCTRLSENSOR"/>
</dbReference>
<dbReference type="SMART" id="SM00304">
    <property type="entry name" value="HAMP"/>
    <property type="match status" value="1"/>
</dbReference>
<dbReference type="SMART" id="SM00387">
    <property type="entry name" value="HATPase_c"/>
    <property type="match status" value="1"/>
</dbReference>
<dbReference type="SMART" id="SM00388">
    <property type="entry name" value="HisKA"/>
    <property type="match status" value="1"/>
</dbReference>
<dbReference type="SUPFAM" id="SSF55874">
    <property type="entry name" value="ATPase domain of HSP90 chaperone/DNA topoisomerase II/histidine kinase"/>
    <property type="match status" value="1"/>
</dbReference>
<dbReference type="SUPFAM" id="SSF47384">
    <property type="entry name" value="Homodimeric domain of signal transducing histidine kinase"/>
    <property type="match status" value="1"/>
</dbReference>
<dbReference type="PROSITE" id="PS50885">
    <property type="entry name" value="HAMP"/>
    <property type="match status" value="1"/>
</dbReference>
<dbReference type="PROSITE" id="PS50109">
    <property type="entry name" value="HIS_KIN"/>
    <property type="match status" value="1"/>
</dbReference>
<protein>
    <recommendedName>
        <fullName evidence="7">Sensor histidine kinase EnvZ</fullName>
        <ecNumber evidence="1">2.7.13.3</ecNumber>
    </recommendedName>
    <alternativeName>
        <fullName evidence="7">Osmolarity sensor protein EnvZ</fullName>
    </alternativeName>
</protein>
<name>ENVZ_SHIFM</name>
<proteinExistence type="evidence at protein level"/>
<accession>A0A4P7TSF2</accession>
<keyword id="KW-0067">ATP-binding</keyword>
<keyword id="KW-0997">Cell inner membrane</keyword>
<keyword id="KW-1003">Cell membrane</keyword>
<keyword id="KW-0418">Kinase</keyword>
<keyword id="KW-0472">Membrane</keyword>
<keyword id="KW-0547">Nucleotide-binding</keyword>
<keyword id="KW-0597">Phosphoprotein</keyword>
<keyword id="KW-0346">Stress response</keyword>
<keyword id="KW-0808">Transferase</keyword>
<keyword id="KW-0812">Transmembrane</keyword>
<keyword id="KW-1133">Transmembrane helix</keyword>
<keyword id="KW-0902">Two-component regulatory system</keyword>
<keyword id="KW-0843">Virulence</keyword>
<evidence type="ECO:0000250" key="1">
    <source>
        <dbReference type="UniProtKB" id="P0AEJ4"/>
    </source>
</evidence>
<evidence type="ECO:0000255" key="2"/>
<evidence type="ECO:0000255" key="3">
    <source>
        <dbReference type="PROSITE-ProRule" id="PRU00102"/>
    </source>
</evidence>
<evidence type="ECO:0000255" key="4">
    <source>
        <dbReference type="PROSITE-ProRule" id="PRU00107"/>
    </source>
</evidence>
<evidence type="ECO:0000269" key="5">
    <source>
    </source>
</evidence>
<evidence type="ECO:0000269" key="6">
    <source>
    </source>
</evidence>
<evidence type="ECO:0000305" key="7"/>
<feature type="chain" id="PRO_0000448909" description="Sensor histidine kinase EnvZ">
    <location>
        <begin position="1"/>
        <end position="450"/>
    </location>
</feature>
<feature type="transmembrane region" description="Helical" evidence="2">
    <location>
        <begin position="12"/>
        <end position="39"/>
    </location>
</feature>
<feature type="transmembrane region" description="Helical" evidence="2">
    <location>
        <begin position="160"/>
        <end position="179"/>
    </location>
</feature>
<feature type="domain" description="HAMP" evidence="3">
    <location>
        <begin position="180"/>
        <end position="232"/>
    </location>
</feature>
<feature type="domain" description="Histidine kinase" evidence="4">
    <location>
        <begin position="240"/>
        <end position="440"/>
    </location>
</feature>
<feature type="region of interest" description="Cytoplasmic dimerization domain (CDD), when dimerized forms osmosensitive core" evidence="1">
    <location>
        <begin position="223"/>
        <end position="289"/>
    </location>
</feature>
<feature type="binding site" evidence="1">
    <location>
        <position position="243"/>
    </location>
    <ligand>
        <name>ATP</name>
        <dbReference type="ChEBI" id="CHEBI:30616"/>
    </ligand>
</feature>
<feature type="binding site" evidence="1">
    <location>
        <begin position="347"/>
        <end position="351"/>
    </location>
    <ligand>
        <name>ATP</name>
        <dbReference type="ChEBI" id="CHEBI:30616"/>
    </ligand>
</feature>
<feature type="binding site" evidence="1">
    <location>
        <position position="373"/>
    </location>
    <ligand>
        <name>ATP</name>
        <dbReference type="ChEBI" id="CHEBI:30616"/>
    </ligand>
</feature>
<feature type="binding site" evidence="1">
    <location>
        <begin position="392"/>
        <end position="393"/>
    </location>
    <ligand>
        <name>ATP</name>
        <dbReference type="ChEBI" id="CHEBI:30616"/>
    </ligand>
</feature>
<feature type="binding site" evidence="1">
    <location>
        <begin position="402"/>
        <end position="406"/>
    </location>
    <ligand>
        <name>ATP</name>
        <dbReference type="ChEBI" id="CHEBI:30616"/>
    </ligand>
</feature>
<feature type="modified residue" description="Phosphohistidine; by autocatalysis" evidence="1 4">
    <location>
        <position position="243"/>
    </location>
</feature>
<gene>
    <name type="primary">envZ</name>
    <name type="ORF">EKN05_021995</name>
</gene>
<comment type="function">
    <text evidence="1 5 6">Member of the two-component regulatory system EnvZ/OmpR involved in the regulation of osmoregulation (genes ompF and ompC). EnvZ functions as a membrane-associated protein kinase that phosphorylates OmpR in response to environmental signals (By similarity). Unlike E.coli, OmpC is expressed at both low and high osmolarity, while OmpF is expressed at low osmolarity. This two-component system plays a role in virulence (PubMed:2121709, PubMed:8359885). Virulence genes of the vir locus are up-regulated within 30 minutes upon growth in high osmolarity medium (PubMed:2121709).</text>
</comment>
<comment type="catalytic activity">
    <reaction evidence="1">
        <text>ATP + protein L-histidine = ADP + protein N-phospho-L-histidine.</text>
        <dbReference type="EC" id="2.7.13.3"/>
    </reaction>
</comment>
<comment type="subunit">
    <text evidence="1">Homodimer.</text>
</comment>
<comment type="subcellular location">
    <subcellularLocation>
        <location evidence="1">Cell inner membrane</location>
        <topology evidence="2">Multi-pass membrane protein</topology>
    </subcellularLocation>
</comment>
<comment type="domain">
    <text evidence="1">Has several major domains; the N-terminal cytoplasmic domain is followed by 2 transmembrane helices that anchor the protein in the membrane; the periplasmic domain between the helices interacts with MrzA. The cytoplasmic C-terminal domain has a HAMP domain joined by a flexible linker to a histidine kinase domain. The HAMP domain by itself is intrinsically disordered. The cytoplasmic dimerization domain (CDD) forms an osmosensitive core and includes the autophosphorylated histidine residue.</text>
</comment>
<comment type="PTM">
    <text evidence="1">Autophosphorylated.</text>
</comment>
<comment type="disruption phenotype">
    <text evidence="5 6">Single gene deletion invades HeLa cells poorly, has a reduced ability to multiply in host cells and does not cause keratoconjunctivitis in guinea pigs. A double ompR-envZ deletion invades HeLa cells less well than the single mutant, has a limited ability to multiply in host cells and does not cause keratoconjunctivitis in guinea pigs (PubMed:2121709). A double ompR-envZ deletion has a lowered rate of infection of HeLa cells. Bacteria are seriously impaired in their ability to spread between host cells. The double deletion strain expresses very low amounts of OmpC and no OmpF (PubMed:8359885).</text>
</comment>
<reference key="1">
    <citation type="submission" date="2019-03" db="EMBL/GenBank/DDBJ databases">
        <title>Complete genome sequence and annotation of the laboratory reference strain Shigella flexneri 5a M90T and genome-wide transcription start site determination.</title>
        <authorList>
            <person name="Cervantes-Rivera R."/>
            <person name="Puhar A."/>
        </authorList>
    </citation>
    <scope>NUCLEOTIDE SEQUENCE [LARGE SCALE GENOMIC DNA]</scope>
    <source>
        <strain>M90T / Serotype 5a</strain>
    </source>
</reference>
<reference key="2">
    <citation type="journal article" date="1990" name="J. Bacteriol.">
        <title>The two-component regulatory system ompR-envZ controls the virulence of Shigella flexneri.</title>
        <authorList>
            <person name="Bernardini M.L."/>
            <person name="Fontaine A."/>
            <person name="Sansonetti P.J."/>
        </authorList>
    </citation>
    <scope>FUNCTION IN VIRULENCE</scope>
    <scope>DISRUPTION PHENOTYPE</scope>
    <source>
        <strain>M90T / Serotype 5a</strain>
    </source>
</reference>
<reference key="3">
    <citation type="journal article" date="1993" name="Infect. Immun.">
        <title>OmpC is involved in invasion of epithelial cells by Shigella flexneri.</title>
        <authorList>
            <person name="Bernardini M.L."/>
            <person name="Sanna M.G."/>
            <person name="Fontaine A."/>
            <person name="Sansonetti P.J."/>
        </authorList>
    </citation>
    <scope>FUNCTION IN VIRULENCE</scope>
    <scope>DISRUPTION PHENOTYPE</scope>
    <source>
        <strain>M90T / Serotype 5a</strain>
    </source>
</reference>
<organism>
    <name type="scientific">Shigella flexneri serotype 5a (strain M90T)</name>
    <dbReference type="NCBI Taxonomy" id="1086030"/>
    <lineage>
        <taxon>Bacteria</taxon>
        <taxon>Pseudomonadati</taxon>
        <taxon>Pseudomonadota</taxon>
        <taxon>Gammaproteobacteria</taxon>
        <taxon>Enterobacterales</taxon>
        <taxon>Enterobacteriaceae</taxon>
        <taxon>Shigella</taxon>
    </lineage>
</organism>